<comment type="subunit">
    <text evidence="1">Part of the 50S ribosomal subunit.</text>
</comment>
<comment type="similarity">
    <text evidence="1">Belongs to the universal ribosomal protein uL30 family.</text>
</comment>
<feature type="chain" id="PRO_0000347124" description="Large ribosomal subunit protein uL30">
    <location>
        <begin position="1"/>
        <end position="89"/>
    </location>
</feature>
<keyword id="KW-1185">Reference proteome</keyword>
<keyword id="KW-0687">Ribonucleoprotein</keyword>
<keyword id="KW-0689">Ribosomal protein</keyword>
<proteinExistence type="inferred from homology"/>
<name>RL30_MYXXD</name>
<evidence type="ECO:0000255" key="1">
    <source>
        <dbReference type="HAMAP-Rule" id="MF_01371"/>
    </source>
</evidence>
<evidence type="ECO:0000305" key="2"/>
<dbReference type="EMBL" id="CP000113">
    <property type="protein sequence ID" value="ABF87599.1"/>
    <property type="molecule type" value="Genomic_DNA"/>
</dbReference>
<dbReference type="RefSeq" id="WP_011553353.1">
    <property type="nucleotide sequence ID" value="NC_008095.1"/>
</dbReference>
<dbReference type="SMR" id="Q1D757"/>
<dbReference type="STRING" id="246197.MXAN_3317"/>
<dbReference type="EnsemblBacteria" id="ABF87599">
    <property type="protein sequence ID" value="ABF87599"/>
    <property type="gene ID" value="MXAN_3317"/>
</dbReference>
<dbReference type="GeneID" id="41360670"/>
<dbReference type="KEGG" id="mxa:MXAN_3317"/>
<dbReference type="eggNOG" id="COG1841">
    <property type="taxonomic scope" value="Bacteria"/>
</dbReference>
<dbReference type="HOGENOM" id="CLU_131047_2_0_7"/>
<dbReference type="OrthoDB" id="9812790at2"/>
<dbReference type="Proteomes" id="UP000002402">
    <property type="component" value="Chromosome"/>
</dbReference>
<dbReference type="GO" id="GO:0022625">
    <property type="term" value="C:cytosolic large ribosomal subunit"/>
    <property type="evidence" value="ECO:0007669"/>
    <property type="project" value="TreeGrafter"/>
</dbReference>
<dbReference type="GO" id="GO:0003735">
    <property type="term" value="F:structural constituent of ribosome"/>
    <property type="evidence" value="ECO:0007669"/>
    <property type="project" value="InterPro"/>
</dbReference>
<dbReference type="GO" id="GO:0006412">
    <property type="term" value="P:translation"/>
    <property type="evidence" value="ECO:0007669"/>
    <property type="project" value="InterPro"/>
</dbReference>
<dbReference type="CDD" id="cd01658">
    <property type="entry name" value="Ribosomal_L30"/>
    <property type="match status" value="1"/>
</dbReference>
<dbReference type="Gene3D" id="3.30.1390.20">
    <property type="entry name" value="Ribosomal protein L30, ferredoxin-like fold domain"/>
    <property type="match status" value="1"/>
</dbReference>
<dbReference type="HAMAP" id="MF_01371_B">
    <property type="entry name" value="Ribosomal_uL30_B"/>
    <property type="match status" value="1"/>
</dbReference>
<dbReference type="InterPro" id="IPR036919">
    <property type="entry name" value="Ribo_uL30_ferredoxin-like_sf"/>
</dbReference>
<dbReference type="InterPro" id="IPR005996">
    <property type="entry name" value="Ribosomal_uL30_bac-type"/>
</dbReference>
<dbReference type="InterPro" id="IPR016082">
    <property type="entry name" value="Ribosomal_uL30_ferredoxin-like"/>
</dbReference>
<dbReference type="NCBIfam" id="TIGR01308">
    <property type="entry name" value="rpmD_bact"/>
    <property type="match status" value="1"/>
</dbReference>
<dbReference type="PANTHER" id="PTHR15892:SF2">
    <property type="entry name" value="LARGE RIBOSOMAL SUBUNIT PROTEIN UL30M"/>
    <property type="match status" value="1"/>
</dbReference>
<dbReference type="PANTHER" id="PTHR15892">
    <property type="entry name" value="MITOCHONDRIAL RIBOSOMAL PROTEIN L30"/>
    <property type="match status" value="1"/>
</dbReference>
<dbReference type="Pfam" id="PF00327">
    <property type="entry name" value="Ribosomal_L30"/>
    <property type="match status" value="1"/>
</dbReference>
<dbReference type="SUPFAM" id="SSF55129">
    <property type="entry name" value="Ribosomal protein L30p/L7e"/>
    <property type="match status" value="1"/>
</dbReference>
<reference key="1">
    <citation type="journal article" date="2006" name="Proc. Natl. Acad. Sci. U.S.A.">
        <title>Evolution of sensory complexity recorded in a myxobacterial genome.</title>
        <authorList>
            <person name="Goldman B.S."/>
            <person name="Nierman W.C."/>
            <person name="Kaiser D."/>
            <person name="Slater S.C."/>
            <person name="Durkin A.S."/>
            <person name="Eisen J.A."/>
            <person name="Ronning C.M."/>
            <person name="Barbazuk W.B."/>
            <person name="Blanchard M."/>
            <person name="Field C."/>
            <person name="Halling C."/>
            <person name="Hinkle G."/>
            <person name="Iartchuk O."/>
            <person name="Kim H.S."/>
            <person name="Mackenzie C."/>
            <person name="Madupu R."/>
            <person name="Miller N."/>
            <person name="Shvartsbeyn A."/>
            <person name="Sullivan S.A."/>
            <person name="Vaudin M."/>
            <person name="Wiegand R."/>
            <person name="Kaplan H.B."/>
        </authorList>
    </citation>
    <scope>NUCLEOTIDE SEQUENCE [LARGE SCALE GENOMIC DNA]</scope>
    <source>
        <strain>DK1622</strain>
    </source>
</reference>
<gene>
    <name evidence="1" type="primary">rpmD</name>
    <name type="ordered locus">MXAN_3317</name>
</gene>
<sequence length="89" mass="9720">MALKVKLVKSFAGASSDMLDTIRGLGLKKFGDERLLKDTPAVRGMAFKVKHLVTLETVSGDAPAPKRRKPAKIALRERAIAYQAKQNKA</sequence>
<protein>
    <recommendedName>
        <fullName evidence="1">Large ribosomal subunit protein uL30</fullName>
    </recommendedName>
    <alternativeName>
        <fullName evidence="2">50S ribosomal protein L30</fullName>
    </alternativeName>
</protein>
<accession>Q1D757</accession>
<organism>
    <name type="scientific">Myxococcus xanthus (strain DK1622)</name>
    <dbReference type="NCBI Taxonomy" id="246197"/>
    <lineage>
        <taxon>Bacteria</taxon>
        <taxon>Pseudomonadati</taxon>
        <taxon>Myxococcota</taxon>
        <taxon>Myxococcia</taxon>
        <taxon>Myxococcales</taxon>
        <taxon>Cystobacterineae</taxon>
        <taxon>Myxococcaceae</taxon>
        <taxon>Myxococcus</taxon>
    </lineage>
</organism>